<evidence type="ECO:0000255" key="1"/>
<evidence type="ECO:0000269" key="2">
    <source>
    </source>
</evidence>
<evidence type="ECO:0000305" key="3"/>
<sequence>MTDLPQAEGGCGAGNERLAAQAAAAGNAELMARFKADYPVGPHDKPQTMCPAFGALRVGLRMRRVATVLCGSACCVYGLSFISHFYGARRSVGYVPFDSETLVTGKLFEDVRASVHDLADPARYDAIVVINLCVPTASGVPLQLLPNEINGVRVVGIDVPGFGVPTHAEAKDVLSGAMLAYARQEVMAGPVPAPISGRSDRPTVTLLGEMFPADPMVIGAMLAPMGLAVGPTVPMRDWRELYAALDSKVVAAIHPFYTAAIRQFEAAGRAIVGSAPVGHDGTMEWLANIGRAYDVSPDKIAAAQNAFGPAIRGAIAGAPIKGRITVSGYEGSELLVARLLIESGAEVPYVGTAAPRTPWSAWDKDWLESRGVVVKYRASLEDDCAAMEGFEPDLAIGTTPLVQKAKALGIPALYFTNLISARPLMGPAGAGSLAQVMNAAMGNRERMGKMKAFFEGVGEGDTAGIWQDTPKLYPDFREQQRKKMEKAAKLAKAEEMI</sequence>
<comment type="function">
    <text evidence="2">Converts chlorophylls (Chl) into bacteriochlorophylls (BChl) by reducing ring B of the tetrapyrrole.</text>
</comment>
<comment type="catalytic activity">
    <reaction evidence="2">
        <text>3-deacetyl-3-vinylbacteriochlorophyllide a + 2 oxidized [2Fe-2S]-[ferredoxin] + ADP + phosphate = chlorophyllide a + 2 reduced [2Fe-2S]-[ferredoxin] + ATP + H2O + H(+)</text>
        <dbReference type="Rhea" id="RHEA:37051"/>
        <dbReference type="Rhea" id="RHEA-COMP:10000"/>
        <dbReference type="Rhea" id="RHEA-COMP:10001"/>
        <dbReference type="ChEBI" id="CHEBI:15377"/>
        <dbReference type="ChEBI" id="CHEBI:15378"/>
        <dbReference type="ChEBI" id="CHEBI:30616"/>
        <dbReference type="ChEBI" id="CHEBI:33737"/>
        <dbReference type="ChEBI" id="CHEBI:33738"/>
        <dbReference type="ChEBI" id="CHEBI:43474"/>
        <dbReference type="ChEBI" id="CHEBI:83348"/>
        <dbReference type="ChEBI" id="CHEBI:83373"/>
        <dbReference type="ChEBI" id="CHEBI:456216"/>
        <dbReference type="EC" id="1.3.7.15"/>
    </reaction>
</comment>
<comment type="catalytic activity">
    <reaction evidence="2">
        <text>bacteriochlorophyllide a + 2 oxidized [2Fe-2S]-[ferredoxin] + ADP + phosphate = 3-acetyl-3-devinylchlorophyllide a + 2 reduced [2Fe-2S]-[ferredoxin] + ATP + H2O + H(+)</text>
        <dbReference type="Rhea" id="RHEA:48944"/>
        <dbReference type="Rhea" id="RHEA-COMP:10000"/>
        <dbReference type="Rhea" id="RHEA-COMP:10001"/>
        <dbReference type="ChEBI" id="CHEBI:15377"/>
        <dbReference type="ChEBI" id="CHEBI:15378"/>
        <dbReference type="ChEBI" id="CHEBI:30616"/>
        <dbReference type="ChEBI" id="CHEBI:33737"/>
        <dbReference type="ChEBI" id="CHEBI:33738"/>
        <dbReference type="ChEBI" id="CHEBI:43474"/>
        <dbReference type="ChEBI" id="CHEBI:90794"/>
        <dbReference type="ChEBI" id="CHEBI:90795"/>
        <dbReference type="ChEBI" id="CHEBI:456216"/>
        <dbReference type="EC" id="1.3.7.15"/>
    </reaction>
</comment>
<comment type="catalytic activity">
    <reaction evidence="2">
        <text>3-deacetyl-3-(1-hydroxyethyl)bacteriochlorophyllide a + 2 oxidized [2Fe-2S]-[ferredoxin] + ADP + phosphate = 3-devinyl-3-(1-hydroxyethyl)chlorophyllide a + 2 reduced [2Fe-2S]-[ferredoxin] + ATP + H2O + H(+)</text>
        <dbReference type="Rhea" id="RHEA:48948"/>
        <dbReference type="Rhea" id="RHEA-COMP:10000"/>
        <dbReference type="Rhea" id="RHEA-COMP:10001"/>
        <dbReference type="ChEBI" id="CHEBI:15377"/>
        <dbReference type="ChEBI" id="CHEBI:15378"/>
        <dbReference type="ChEBI" id="CHEBI:30616"/>
        <dbReference type="ChEBI" id="CHEBI:33737"/>
        <dbReference type="ChEBI" id="CHEBI:33738"/>
        <dbReference type="ChEBI" id="CHEBI:43474"/>
        <dbReference type="ChEBI" id="CHEBI:90791"/>
        <dbReference type="ChEBI" id="CHEBI:90792"/>
        <dbReference type="ChEBI" id="CHEBI:456216"/>
        <dbReference type="EC" id="1.3.7.15"/>
    </reaction>
</comment>
<comment type="pathway">
    <text>Porphyrin-containing compound metabolism; bacteriochlorophyll biosynthesis (light-independent).</text>
</comment>
<comment type="subunit">
    <text evidence="2">Chlorophyllide reductase is composed of three subunits; BchX, BchY and BchZ. Forms a heterodimer of one BchY and one BchZ subunit.</text>
</comment>
<comment type="subcellular location">
    <subcellularLocation>
        <location evidence="3">Cell membrane</location>
        <topology evidence="3">Multi-pass membrane protein</topology>
    </subcellularLocation>
</comment>
<comment type="similarity">
    <text evidence="3">Belongs to the BchN/ChlN family.</text>
</comment>
<accession>P26178</accession>
<accession>D5AP81</accession>
<dbReference type="EC" id="1.3.7.15" evidence="2"/>
<dbReference type="EMBL" id="Z11165">
    <property type="protein sequence ID" value="CAA77549.1"/>
    <property type="molecule type" value="Genomic_DNA"/>
</dbReference>
<dbReference type="EMBL" id="CP001312">
    <property type="protein sequence ID" value="ADE84453.1"/>
    <property type="molecule type" value="Genomic_DNA"/>
</dbReference>
<dbReference type="PIR" id="C49850">
    <property type="entry name" value="C49850"/>
</dbReference>
<dbReference type="RefSeq" id="WP_013066432.1">
    <property type="nucleotide sequence ID" value="NC_014034.1"/>
</dbReference>
<dbReference type="SMR" id="P26178"/>
<dbReference type="STRING" id="272942.RCAP_rcc00688"/>
<dbReference type="GeneID" id="31489634"/>
<dbReference type="KEGG" id="rcp:RCAP_rcc00688"/>
<dbReference type="eggNOG" id="COG2710">
    <property type="taxonomic scope" value="Bacteria"/>
</dbReference>
<dbReference type="HOGENOM" id="CLU_536179_0_0_5"/>
<dbReference type="OrthoDB" id="5754220at2"/>
<dbReference type="BioCyc" id="MetaCyc:MONOMER-13254"/>
<dbReference type="UniPathway" id="UPA00671"/>
<dbReference type="Proteomes" id="UP000002361">
    <property type="component" value="Chromosome"/>
</dbReference>
<dbReference type="GO" id="GO:0005886">
    <property type="term" value="C:plasma membrane"/>
    <property type="evidence" value="ECO:0007669"/>
    <property type="project" value="UniProtKB-SubCell"/>
</dbReference>
<dbReference type="GO" id="GO:0016731">
    <property type="term" value="F:oxidoreductase activity, acting on iron-sulfur proteins as donors, NAD or NADP as acceptor"/>
    <property type="evidence" value="ECO:0007669"/>
    <property type="project" value="InterPro"/>
</dbReference>
<dbReference type="GO" id="GO:0036070">
    <property type="term" value="P:light-independent bacteriochlorophyll biosynthetic process"/>
    <property type="evidence" value="ECO:0007669"/>
    <property type="project" value="UniProtKB-UniPathway"/>
</dbReference>
<dbReference type="GO" id="GO:0015979">
    <property type="term" value="P:photosynthesis"/>
    <property type="evidence" value="ECO:0007669"/>
    <property type="project" value="UniProtKB-KW"/>
</dbReference>
<dbReference type="Gene3D" id="3.40.50.1980">
    <property type="entry name" value="Nitrogenase molybdenum iron protein domain"/>
    <property type="match status" value="2"/>
</dbReference>
<dbReference type="InterPro" id="IPR010245">
    <property type="entry name" value="BchY"/>
</dbReference>
<dbReference type="InterPro" id="IPR050293">
    <property type="entry name" value="LIPOR_BchN/ChlN"/>
</dbReference>
<dbReference type="InterPro" id="IPR000510">
    <property type="entry name" value="Nase/OxRdtase_comp1"/>
</dbReference>
<dbReference type="InterPro" id="IPR016209">
    <property type="entry name" value="Protochlorophyllide_Rdtase"/>
</dbReference>
<dbReference type="NCBIfam" id="TIGR02015">
    <property type="entry name" value="BchY"/>
    <property type="match status" value="1"/>
</dbReference>
<dbReference type="PANTHER" id="PTHR39429">
    <property type="entry name" value="LIGHT-INDEPENDENT PROTOCHLOROPHYLLIDE REDUCTASE SUBUNIT N"/>
    <property type="match status" value="1"/>
</dbReference>
<dbReference type="PANTHER" id="PTHR39429:SF3">
    <property type="entry name" value="LIGHT-INDEPENDENT PROTOCHLOROPHYLLIDE REDUCTASE SUBUNIT N"/>
    <property type="match status" value="1"/>
</dbReference>
<dbReference type="Pfam" id="PF00148">
    <property type="entry name" value="Oxidored_nitro"/>
    <property type="match status" value="1"/>
</dbReference>
<dbReference type="PIRSF" id="PIRSF000163">
    <property type="entry name" value="PCP_ChlB"/>
    <property type="match status" value="1"/>
</dbReference>
<dbReference type="SUPFAM" id="SSF53807">
    <property type="entry name" value="Helical backbone' metal receptor"/>
    <property type="match status" value="1"/>
</dbReference>
<name>BCHY_RHOCB</name>
<feature type="chain" id="PRO_0000208622" description="Chlorophyllide reductase 52.5 kDa chain">
    <location>
        <begin position="1"/>
        <end position="497"/>
    </location>
</feature>
<feature type="transmembrane region" description="Helical" evidence="1">
    <location>
        <begin position="65"/>
        <end position="82"/>
    </location>
</feature>
<feature type="transmembrane region" description="Helical" evidence="1">
    <location>
        <begin position="126"/>
        <end position="142"/>
    </location>
</feature>
<feature type="transmembrane region" description="Helical" evidence="1">
    <location>
        <begin position="216"/>
        <end position="233"/>
    </location>
</feature>
<gene>
    <name type="primary">bchY</name>
    <name type="ordered locus">RCAP_rcc00688</name>
</gene>
<keyword id="KW-0077">Bacteriochlorophyll biosynthesis</keyword>
<keyword id="KW-1003">Cell membrane</keyword>
<keyword id="KW-0149">Chlorophyll biosynthesis</keyword>
<keyword id="KW-0472">Membrane</keyword>
<keyword id="KW-0560">Oxidoreductase</keyword>
<keyword id="KW-0602">Photosynthesis</keyword>
<keyword id="KW-1185">Reference proteome</keyword>
<keyword id="KW-0812">Transmembrane</keyword>
<keyword id="KW-1133">Transmembrane helix</keyword>
<organism>
    <name type="scientific">Rhodobacter capsulatus (strain ATCC BAA-309 / NBRC 16581 / SB1003)</name>
    <dbReference type="NCBI Taxonomy" id="272942"/>
    <lineage>
        <taxon>Bacteria</taxon>
        <taxon>Pseudomonadati</taxon>
        <taxon>Pseudomonadota</taxon>
        <taxon>Alphaproteobacteria</taxon>
        <taxon>Rhodobacterales</taxon>
        <taxon>Rhodobacter group</taxon>
        <taxon>Rhodobacter</taxon>
    </lineage>
</organism>
<reference key="1">
    <citation type="journal article" date="1993" name="J. Bacteriol.">
        <title>The Rhodobacter capsulatus chlorin reductase-encoding locus, bchA, consists of three genes, bchX, bchY, and bchZ.</title>
        <authorList>
            <person name="Burke D.H."/>
            <person name="Alberti M."/>
            <person name="Hearst J.E."/>
        </authorList>
    </citation>
    <scope>NUCLEOTIDE SEQUENCE [GENOMIC DNA]</scope>
    <source>
        <strain>ATCC BAA-309 / NBRC 16581 / SB1003</strain>
    </source>
</reference>
<reference key="2">
    <citation type="journal article" date="2010" name="J. Bacteriol.">
        <title>Complete genome sequence of the photosynthetic purple nonsulfur bacterium Rhodobacter capsulatus SB 1003.</title>
        <authorList>
            <person name="Strnad H."/>
            <person name="Lapidus A."/>
            <person name="Paces J."/>
            <person name="Ulbrich P."/>
            <person name="Vlcek C."/>
            <person name="Paces V."/>
            <person name="Haselkorn R."/>
        </authorList>
    </citation>
    <scope>NUCLEOTIDE SEQUENCE [LARGE SCALE GENOMIC DNA]</scope>
    <source>
        <strain>ATCC BAA-309 / NBRC 16581 / SB1003</strain>
    </source>
</reference>
<reference key="3">
    <citation type="journal article" date="2006" name="J. Biol. Chem.">
        <title>A second nitrogenase-like enzyme for bacteriochlorophyll biosynthesis: reconstitution of chlorophyllide a reductase with purified X-protein (BchX) and YZ-protein (BchY-BchZ) from Rhodobacter capsulatus.</title>
        <authorList>
            <person name="Nomata J."/>
            <person name="Mizoguchi T."/>
            <person name="Tamiaki H."/>
            <person name="Fujita Y."/>
        </authorList>
    </citation>
    <scope>FUNCTION</scope>
    <scope>CATALYTIC ACTIVITY</scope>
    <scope>SUBUNIT</scope>
</reference>
<protein>
    <recommendedName>
        <fullName>Chlorophyllide reductase 52.5 kDa chain</fullName>
        <ecNumber evidence="2">1.3.7.15</ecNumber>
    </recommendedName>
    <alternativeName>
        <fullName>Chlorin reductase</fullName>
    </alternativeName>
</protein>
<proteinExistence type="evidence at protein level"/>